<evidence type="ECO:0000255" key="1"/>
<evidence type="ECO:0000255" key="2">
    <source>
        <dbReference type="HAMAP-Rule" id="MF_00517"/>
    </source>
</evidence>
<reference key="1">
    <citation type="journal article" date="2001" name="Nature">
        <title>Complete genome sequence of a multiple drug resistant Salmonella enterica serovar Typhi CT18.</title>
        <authorList>
            <person name="Parkhill J."/>
            <person name="Dougan G."/>
            <person name="James K.D."/>
            <person name="Thomson N.R."/>
            <person name="Pickard D."/>
            <person name="Wain J."/>
            <person name="Churcher C.M."/>
            <person name="Mungall K.L."/>
            <person name="Bentley S.D."/>
            <person name="Holden M.T.G."/>
            <person name="Sebaihia M."/>
            <person name="Baker S."/>
            <person name="Basham D."/>
            <person name="Brooks K."/>
            <person name="Chillingworth T."/>
            <person name="Connerton P."/>
            <person name="Cronin A."/>
            <person name="Davis P."/>
            <person name="Davies R.M."/>
            <person name="Dowd L."/>
            <person name="White N."/>
            <person name="Farrar J."/>
            <person name="Feltwell T."/>
            <person name="Hamlin N."/>
            <person name="Haque A."/>
            <person name="Hien T.T."/>
            <person name="Holroyd S."/>
            <person name="Jagels K."/>
            <person name="Krogh A."/>
            <person name="Larsen T.S."/>
            <person name="Leather S."/>
            <person name="Moule S."/>
            <person name="O'Gaora P."/>
            <person name="Parry C."/>
            <person name="Quail M.A."/>
            <person name="Rutherford K.M."/>
            <person name="Simmonds M."/>
            <person name="Skelton J."/>
            <person name="Stevens K."/>
            <person name="Whitehead S."/>
            <person name="Barrell B.G."/>
        </authorList>
    </citation>
    <scope>NUCLEOTIDE SEQUENCE [LARGE SCALE GENOMIC DNA]</scope>
    <source>
        <strain>CT18</strain>
    </source>
</reference>
<reference key="2">
    <citation type="journal article" date="2003" name="J. Bacteriol.">
        <title>Comparative genomics of Salmonella enterica serovar Typhi strains Ty2 and CT18.</title>
        <authorList>
            <person name="Deng W."/>
            <person name="Liou S.-R."/>
            <person name="Plunkett G. III"/>
            <person name="Mayhew G.F."/>
            <person name="Rose D.J."/>
            <person name="Burland V."/>
            <person name="Kodoyianni V."/>
            <person name="Schwartz D.C."/>
            <person name="Blattner F.R."/>
        </authorList>
    </citation>
    <scope>NUCLEOTIDE SEQUENCE [LARGE SCALE GENOMIC DNA]</scope>
    <source>
        <strain>ATCC 700931 / Ty2</strain>
    </source>
</reference>
<feature type="chain" id="PRO_0000209334" description="Probable sugar efflux transporter">
    <location>
        <begin position="1"/>
        <end position="396"/>
    </location>
</feature>
<feature type="topological domain" description="Cytoplasmic" evidence="1">
    <location>
        <begin position="1"/>
        <end position="14"/>
    </location>
</feature>
<feature type="transmembrane region" description="Helical" evidence="2">
    <location>
        <begin position="15"/>
        <end position="35"/>
    </location>
</feature>
<feature type="topological domain" description="Periplasmic" evidence="1">
    <location>
        <begin position="36"/>
        <end position="49"/>
    </location>
</feature>
<feature type="transmembrane region" description="Helical" evidence="2">
    <location>
        <begin position="50"/>
        <end position="70"/>
    </location>
</feature>
<feature type="topological domain" description="Cytoplasmic" evidence="1">
    <location>
        <begin position="71"/>
        <end position="80"/>
    </location>
</feature>
<feature type="transmembrane region" description="Helical" evidence="2">
    <location>
        <begin position="81"/>
        <end position="101"/>
    </location>
</feature>
<feature type="topological domain" description="Periplasmic" evidence="1">
    <location>
        <position position="102"/>
    </location>
</feature>
<feature type="transmembrane region" description="Helical" evidence="2">
    <location>
        <begin position="103"/>
        <end position="123"/>
    </location>
</feature>
<feature type="topological domain" description="Cytoplasmic" evidence="1">
    <location>
        <begin position="124"/>
        <end position="135"/>
    </location>
</feature>
<feature type="transmembrane region" description="Helical" evidence="2">
    <location>
        <begin position="136"/>
        <end position="156"/>
    </location>
</feature>
<feature type="topological domain" description="Periplasmic" evidence="1">
    <location>
        <begin position="157"/>
        <end position="168"/>
    </location>
</feature>
<feature type="transmembrane region" description="Helical" evidence="2">
    <location>
        <begin position="169"/>
        <end position="189"/>
    </location>
</feature>
<feature type="topological domain" description="Cytoplasmic" evidence="1">
    <location>
        <begin position="190"/>
        <end position="208"/>
    </location>
</feature>
<feature type="transmembrane region" description="Helical" evidence="2">
    <location>
        <begin position="209"/>
        <end position="229"/>
    </location>
</feature>
<feature type="topological domain" description="Periplasmic" evidence="1">
    <location>
        <begin position="230"/>
        <end position="245"/>
    </location>
</feature>
<feature type="transmembrane region" description="Helical" evidence="2">
    <location>
        <begin position="246"/>
        <end position="266"/>
    </location>
</feature>
<feature type="topological domain" description="Cytoplasmic" evidence="1">
    <location>
        <begin position="267"/>
        <end position="274"/>
    </location>
</feature>
<feature type="transmembrane region" description="Helical" evidence="2">
    <location>
        <begin position="275"/>
        <end position="295"/>
    </location>
</feature>
<feature type="topological domain" description="Periplasmic" evidence="1">
    <location>
        <begin position="296"/>
        <end position="300"/>
    </location>
</feature>
<feature type="transmembrane region" description="Helical" evidence="2">
    <location>
        <begin position="301"/>
        <end position="321"/>
    </location>
</feature>
<feature type="topological domain" description="Cytoplasmic" evidence="1">
    <location>
        <begin position="322"/>
        <end position="332"/>
    </location>
</feature>
<feature type="transmembrane region" description="Helical" evidence="2">
    <location>
        <begin position="333"/>
        <end position="353"/>
    </location>
</feature>
<feature type="topological domain" description="Periplasmic" evidence="1">
    <location>
        <begin position="354"/>
        <end position="363"/>
    </location>
</feature>
<feature type="transmembrane region" description="Helical" evidence="2">
    <location>
        <begin position="364"/>
        <end position="384"/>
    </location>
</feature>
<feature type="topological domain" description="Cytoplasmic" evidence="1">
    <location>
        <begin position="385"/>
        <end position="396"/>
    </location>
</feature>
<dbReference type="EMBL" id="AL513382">
    <property type="protein sequence ID" value="CAD01791.1"/>
    <property type="molecule type" value="Genomic_DNA"/>
</dbReference>
<dbReference type="EMBL" id="AE014613">
    <property type="protein sequence ID" value="AAO69085.1"/>
    <property type="molecule type" value="Genomic_DNA"/>
</dbReference>
<dbReference type="RefSeq" id="NP_455958.1">
    <property type="nucleotide sequence ID" value="NC_003198.1"/>
</dbReference>
<dbReference type="RefSeq" id="WP_000154617.1">
    <property type="nucleotide sequence ID" value="NZ_WSUR01000006.1"/>
</dbReference>
<dbReference type="SMR" id="P58530"/>
<dbReference type="KEGG" id="stt:t1443"/>
<dbReference type="KEGG" id="sty:STY1538"/>
<dbReference type="PATRIC" id="fig|220341.7.peg.1547"/>
<dbReference type="eggNOG" id="COG2814">
    <property type="taxonomic scope" value="Bacteria"/>
</dbReference>
<dbReference type="HOGENOM" id="CLU_001265_61_2_6"/>
<dbReference type="OMA" id="AFQVGIM"/>
<dbReference type="OrthoDB" id="9788453at2"/>
<dbReference type="Proteomes" id="UP000000541">
    <property type="component" value="Chromosome"/>
</dbReference>
<dbReference type="Proteomes" id="UP000002670">
    <property type="component" value="Chromosome"/>
</dbReference>
<dbReference type="GO" id="GO:0005886">
    <property type="term" value="C:plasma membrane"/>
    <property type="evidence" value="ECO:0007669"/>
    <property type="project" value="UniProtKB-SubCell"/>
</dbReference>
<dbReference type="GO" id="GO:0015144">
    <property type="term" value="F:carbohydrate transmembrane transporter activity"/>
    <property type="evidence" value="ECO:0007669"/>
    <property type="project" value="UniProtKB-UniRule"/>
</dbReference>
<dbReference type="CDD" id="cd17324">
    <property type="entry name" value="MFS_NepI_like"/>
    <property type="match status" value="1"/>
</dbReference>
<dbReference type="Gene3D" id="1.20.1250.20">
    <property type="entry name" value="MFS general substrate transporter like domains"/>
    <property type="match status" value="1"/>
</dbReference>
<dbReference type="HAMAP" id="MF_00517">
    <property type="entry name" value="MFS_SotB"/>
    <property type="match status" value="1"/>
</dbReference>
<dbReference type="InterPro" id="IPR011701">
    <property type="entry name" value="MFS"/>
</dbReference>
<dbReference type="InterPro" id="IPR020846">
    <property type="entry name" value="MFS_dom"/>
</dbReference>
<dbReference type="InterPro" id="IPR050189">
    <property type="entry name" value="MFS_Efflux_Transporters"/>
</dbReference>
<dbReference type="InterPro" id="IPR036259">
    <property type="entry name" value="MFS_trans_sf"/>
</dbReference>
<dbReference type="InterPro" id="IPR023495">
    <property type="entry name" value="Sugar_effux_transptr_put"/>
</dbReference>
<dbReference type="NCBIfam" id="NF002921">
    <property type="entry name" value="PRK03545.1"/>
    <property type="match status" value="1"/>
</dbReference>
<dbReference type="PANTHER" id="PTHR43124">
    <property type="entry name" value="PURINE EFFLUX PUMP PBUE"/>
    <property type="match status" value="1"/>
</dbReference>
<dbReference type="PANTHER" id="PTHR43124:SF4">
    <property type="entry name" value="SUGAR EFFLUX TRANSPORTER"/>
    <property type="match status" value="1"/>
</dbReference>
<dbReference type="Pfam" id="PF07690">
    <property type="entry name" value="MFS_1"/>
    <property type="match status" value="1"/>
</dbReference>
<dbReference type="SUPFAM" id="SSF103473">
    <property type="entry name" value="MFS general substrate transporter"/>
    <property type="match status" value="1"/>
</dbReference>
<dbReference type="PROSITE" id="PS50850">
    <property type="entry name" value="MFS"/>
    <property type="match status" value="1"/>
</dbReference>
<comment type="function">
    <text evidence="2">Involved in the efflux of sugars. The physiological role may be the reduction of the intracellular concentration of toxic sugars or sugar metabolites.</text>
</comment>
<comment type="subcellular location">
    <subcellularLocation>
        <location evidence="2">Cell inner membrane</location>
        <topology evidence="2">Multi-pass membrane protein</topology>
    </subcellularLocation>
</comment>
<comment type="similarity">
    <text evidence="2">Belongs to the major facilitator superfamily. SotB (TC 2.A.1.2) family.</text>
</comment>
<name>SOTB_SALTI</name>
<accession>P58530</accession>
<sequence length="396" mass="42407">MTINPVSRKVAWLRVVTLAIAAFIFNTTEFVPVGLLSDIAESFHMQTAQVGIMLTIYAWVVAVMSLPFMLLTSQMERRKLLICLFVLFIASHVLSFLAWNFTVLVISRIGIAFAHAIFWSITASLAIRLAPAGKRAQALSLIATGTALAMVLGLPIGRVVGQYFGWRTTFFAIGMGALITLLCLIKLLPKLPSEHSGSLKSLPLLFRRPALMSLYVLTVVVVTAHYTAYSYIEPFVQNVAGLSANFATVLLLILGGAGIIGSLVFGKLGNRHASSLVSIAIALLVVCLLLLLPAADSEAHLAILSIFWGIAIMVIGLGMQVKVLALAPDATDVAMALFSGIFNIGIGAGALVGNQVSLHWSMSAIGYIGAIPACAALVWAVLIFRKWPVTLEEQPH</sequence>
<proteinExistence type="inferred from homology"/>
<protein>
    <recommendedName>
        <fullName evidence="2">Probable sugar efflux transporter</fullName>
    </recommendedName>
</protein>
<keyword id="KW-0997">Cell inner membrane</keyword>
<keyword id="KW-1003">Cell membrane</keyword>
<keyword id="KW-0472">Membrane</keyword>
<keyword id="KW-0762">Sugar transport</keyword>
<keyword id="KW-0812">Transmembrane</keyword>
<keyword id="KW-1133">Transmembrane helix</keyword>
<keyword id="KW-0813">Transport</keyword>
<gene>
    <name evidence="2" type="primary">sotB</name>
    <name type="ordered locus">STY1538</name>
    <name type="ordered locus">t1443</name>
</gene>
<organism>
    <name type="scientific">Salmonella typhi</name>
    <dbReference type="NCBI Taxonomy" id="90370"/>
    <lineage>
        <taxon>Bacteria</taxon>
        <taxon>Pseudomonadati</taxon>
        <taxon>Pseudomonadota</taxon>
        <taxon>Gammaproteobacteria</taxon>
        <taxon>Enterobacterales</taxon>
        <taxon>Enterobacteriaceae</taxon>
        <taxon>Salmonella</taxon>
    </lineage>
</organism>